<reference key="1">
    <citation type="submission" date="2007-09" db="EMBL/GenBank/DDBJ databases">
        <title>Complete sequence of chromosome of Serratia proteamaculans 568.</title>
        <authorList>
            <consortium name="US DOE Joint Genome Institute"/>
            <person name="Copeland A."/>
            <person name="Lucas S."/>
            <person name="Lapidus A."/>
            <person name="Barry K."/>
            <person name="Glavina del Rio T."/>
            <person name="Dalin E."/>
            <person name="Tice H."/>
            <person name="Pitluck S."/>
            <person name="Chain P."/>
            <person name="Malfatti S."/>
            <person name="Shin M."/>
            <person name="Vergez L."/>
            <person name="Schmutz J."/>
            <person name="Larimer F."/>
            <person name="Land M."/>
            <person name="Hauser L."/>
            <person name="Kyrpides N."/>
            <person name="Kim E."/>
            <person name="Taghavi S."/>
            <person name="Newman L."/>
            <person name="Vangronsveld J."/>
            <person name="van der Lelie D."/>
            <person name="Richardson P."/>
        </authorList>
    </citation>
    <scope>NUCLEOTIDE SEQUENCE [LARGE SCALE GENOMIC DNA]</scope>
    <source>
        <strain>568</strain>
    </source>
</reference>
<organism>
    <name type="scientific">Serratia proteamaculans (strain 568)</name>
    <dbReference type="NCBI Taxonomy" id="399741"/>
    <lineage>
        <taxon>Bacteria</taxon>
        <taxon>Pseudomonadati</taxon>
        <taxon>Pseudomonadota</taxon>
        <taxon>Gammaproteobacteria</taxon>
        <taxon>Enterobacterales</taxon>
        <taxon>Yersiniaceae</taxon>
        <taxon>Serratia</taxon>
    </lineage>
</organism>
<gene>
    <name evidence="1" type="primary">slyA</name>
    <name type="ordered locus">Spro_2214</name>
</gene>
<dbReference type="EMBL" id="CP000826">
    <property type="protein sequence ID" value="ABV41315.1"/>
    <property type="molecule type" value="Genomic_DNA"/>
</dbReference>
<dbReference type="SMR" id="A8GDX5"/>
<dbReference type="STRING" id="399741.Spro_2214"/>
<dbReference type="KEGG" id="spe:Spro_2214"/>
<dbReference type="eggNOG" id="COG1846">
    <property type="taxonomic scope" value="Bacteria"/>
</dbReference>
<dbReference type="HOGENOM" id="CLU_083287_18_2_6"/>
<dbReference type="OrthoDB" id="5296557at2"/>
<dbReference type="GO" id="GO:0003677">
    <property type="term" value="F:DNA binding"/>
    <property type="evidence" value="ECO:0007669"/>
    <property type="project" value="UniProtKB-UniRule"/>
</dbReference>
<dbReference type="GO" id="GO:0003700">
    <property type="term" value="F:DNA-binding transcription factor activity"/>
    <property type="evidence" value="ECO:0007669"/>
    <property type="project" value="UniProtKB-UniRule"/>
</dbReference>
<dbReference type="GO" id="GO:0006950">
    <property type="term" value="P:response to stress"/>
    <property type="evidence" value="ECO:0007669"/>
    <property type="project" value="TreeGrafter"/>
</dbReference>
<dbReference type="FunFam" id="1.10.10.10:FF:000261">
    <property type="entry name" value="Transcriptional regulator SlyA"/>
    <property type="match status" value="1"/>
</dbReference>
<dbReference type="Gene3D" id="1.10.10.10">
    <property type="entry name" value="Winged helix-like DNA-binding domain superfamily/Winged helix DNA-binding domain"/>
    <property type="match status" value="1"/>
</dbReference>
<dbReference type="HAMAP" id="MF_01819">
    <property type="entry name" value="HTH_type_SlyA"/>
    <property type="match status" value="1"/>
</dbReference>
<dbReference type="InterPro" id="IPR000835">
    <property type="entry name" value="HTH_MarR-typ"/>
</dbReference>
<dbReference type="InterPro" id="IPR039422">
    <property type="entry name" value="MarR/SlyA-like"/>
</dbReference>
<dbReference type="InterPro" id="IPR023187">
    <property type="entry name" value="Tscrpt_reg_MarR-type_CS"/>
</dbReference>
<dbReference type="InterPro" id="IPR023071">
    <property type="entry name" value="Tscrpt_reg_SlyA"/>
</dbReference>
<dbReference type="InterPro" id="IPR036388">
    <property type="entry name" value="WH-like_DNA-bd_sf"/>
</dbReference>
<dbReference type="InterPro" id="IPR036390">
    <property type="entry name" value="WH_DNA-bd_sf"/>
</dbReference>
<dbReference type="NCBIfam" id="NF002926">
    <property type="entry name" value="PRK03573.1"/>
    <property type="match status" value="1"/>
</dbReference>
<dbReference type="PANTHER" id="PTHR33164:SF64">
    <property type="entry name" value="TRANSCRIPTIONAL REGULATOR SLYA"/>
    <property type="match status" value="1"/>
</dbReference>
<dbReference type="PANTHER" id="PTHR33164">
    <property type="entry name" value="TRANSCRIPTIONAL REGULATOR, MARR FAMILY"/>
    <property type="match status" value="1"/>
</dbReference>
<dbReference type="Pfam" id="PF01047">
    <property type="entry name" value="MarR"/>
    <property type="match status" value="1"/>
</dbReference>
<dbReference type="PRINTS" id="PR00598">
    <property type="entry name" value="HTHMARR"/>
</dbReference>
<dbReference type="SMART" id="SM00347">
    <property type="entry name" value="HTH_MARR"/>
    <property type="match status" value="1"/>
</dbReference>
<dbReference type="SUPFAM" id="SSF46785">
    <property type="entry name" value="Winged helix' DNA-binding domain"/>
    <property type="match status" value="1"/>
</dbReference>
<dbReference type="PROSITE" id="PS01117">
    <property type="entry name" value="HTH_MARR_1"/>
    <property type="match status" value="1"/>
</dbReference>
<dbReference type="PROSITE" id="PS50995">
    <property type="entry name" value="HTH_MARR_2"/>
    <property type="match status" value="1"/>
</dbReference>
<protein>
    <recommendedName>
        <fullName evidence="1">Transcriptional regulator SlyA</fullName>
    </recommendedName>
</protein>
<accession>A8GDX5</accession>
<evidence type="ECO:0000255" key="1">
    <source>
        <dbReference type="HAMAP-Rule" id="MF_01819"/>
    </source>
</evidence>
<keyword id="KW-0010">Activator</keyword>
<keyword id="KW-0238">DNA-binding</keyword>
<keyword id="KW-0678">Repressor</keyword>
<keyword id="KW-0804">Transcription</keyword>
<keyword id="KW-0805">Transcription regulation</keyword>
<proteinExistence type="inferred from homology"/>
<name>SLYA_SERP5</name>
<comment type="function">
    <text evidence="1">Transcription regulator that can specifically activate or repress expression of target genes.</text>
</comment>
<comment type="subunit">
    <text evidence="1">Homodimer.</text>
</comment>
<comment type="similarity">
    <text evidence="1">Belongs to the SlyA family.</text>
</comment>
<feature type="chain" id="PRO_1000070355" description="Transcriptional regulator SlyA">
    <location>
        <begin position="1"/>
        <end position="144"/>
    </location>
</feature>
<feature type="domain" description="HTH marR-type" evidence="1">
    <location>
        <begin position="2"/>
        <end position="135"/>
    </location>
</feature>
<feature type="DNA-binding region" description="H-T-H motif" evidence="1">
    <location>
        <begin position="49"/>
        <end position="72"/>
    </location>
</feature>
<sequence>MESTLGSDLARLVRVWRALIDHRLKPLALTQTHWVTLHSINRLPPEQSQIQLAKAIGIEQPSLVRTLDQLEEKGLITRHTCANDRRAKRIKLTEAADPIIREVDSVISSTRGEILSGITTDEVQLLVGLIGKLEQNITELQNKQ</sequence>